<comment type="subunit">
    <text evidence="1">Homodimer.</text>
</comment>
<comment type="similarity">
    <text evidence="1">Belongs to the UPF0210 family.</text>
</comment>
<evidence type="ECO:0000255" key="1">
    <source>
        <dbReference type="HAMAP-Rule" id="MF_01221"/>
    </source>
</evidence>
<gene>
    <name type="ordered locus">Ccon26_06850</name>
    <name type="ORF">CCC13826_1471</name>
</gene>
<reference key="1">
    <citation type="submission" date="2007-10" db="EMBL/GenBank/DDBJ databases">
        <title>Genome sequence of Campylobacter concisus 13826 isolated from human feces.</title>
        <authorList>
            <person name="Fouts D.E."/>
            <person name="Mongodin E.F."/>
            <person name="Puiu D."/>
            <person name="Sebastian Y."/>
            <person name="Miller W.G."/>
            <person name="Mandrell R.E."/>
            <person name="On S."/>
            <person name="Nelson K.E."/>
        </authorList>
    </citation>
    <scope>NUCLEOTIDE SEQUENCE [LARGE SCALE GENOMIC DNA]</scope>
    <source>
        <strain>13826</strain>
    </source>
</reference>
<sequence>MDIKNVTETISMIEEQNFDIRTITMGISLLDCIDSDINKACDKIYAKITTKAKDLVRVGNEISAELGIPIVNKRVSVTPISIIGAATNASDYVMIAKTLDRAAIEVGIDFIGGFSALVQKGYQKGDEILINSIPQALAQTAKVCSSVNVGSTKSGINMSAVRDMGRIIKETAAASEMGCAKLVVFANAVEDNPFMAGAFHGVGEADVVINVGVSGPGVVKRALEKVRGESFDVVAETVKKTAFKITRIGQLVGQMASERLGVKFGIVDLSLAPTPAVGDSVARVLEEMGLEAVGTHGTTAALALLNDAVKKGGVMACNQVGGLSGAFIPVSEDEGMIAAVRAGSLNLEKLEAMTAICSVGLDMIAIPADTPSESIAAMIADEAAIGVINQKTTAVRIIPLGREGDMIEFGGLLGRAPVMKINKASSADFIARGGQIPAPIHSFKN</sequence>
<proteinExistence type="inferred from homology"/>
<organism>
    <name type="scientific">Campylobacter concisus (strain 13826)</name>
    <dbReference type="NCBI Taxonomy" id="360104"/>
    <lineage>
        <taxon>Bacteria</taxon>
        <taxon>Pseudomonadati</taxon>
        <taxon>Campylobacterota</taxon>
        <taxon>Epsilonproteobacteria</taxon>
        <taxon>Campylobacterales</taxon>
        <taxon>Campylobacteraceae</taxon>
        <taxon>Campylobacter</taxon>
    </lineage>
</organism>
<name>Y685_CAMC1</name>
<protein>
    <recommendedName>
        <fullName evidence="1">UPF0210 protein Ccon26_06850</fullName>
    </recommendedName>
</protein>
<dbReference type="EMBL" id="CP000792">
    <property type="protein sequence ID" value="EAT97601.1"/>
    <property type="molecule type" value="Genomic_DNA"/>
</dbReference>
<dbReference type="RefSeq" id="WP_012001522.1">
    <property type="nucleotide sequence ID" value="NC_009802.2"/>
</dbReference>
<dbReference type="SMR" id="A7ZCQ6"/>
<dbReference type="STRING" id="360104.CCC13826_1471"/>
<dbReference type="KEGG" id="cco:CCC13826_1471"/>
<dbReference type="eggNOG" id="COG2848">
    <property type="taxonomic scope" value="Bacteria"/>
</dbReference>
<dbReference type="HOGENOM" id="CLU_048704_0_0_7"/>
<dbReference type="OrthoDB" id="9763001at2"/>
<dbReference type="Proteomes" id="UP000001121">
    <property type="component" value="Chromosome"/>
</dbReference>
<dbReference type="CDD" id="cd08025">
    <property type="entry name" value="RNR_PFL_like_DUF711"/>
    <property type="match status" value="1"/>
</dbReference>
<dbReference type="Gene3D" id="3.20.70.20">
    <property type="match status" value="1"/>
</dbReference>
<dbReference type="HAMAP" id="MF_01221">
    <property type="entry name" value="UPF0210"/>
    <property type="match status" value="1"/>
</dbReference>
<dbReference type="InterPro" id="IPR007841">
    <property type="entry name" value="UPF0210"/>
</dbReference>
<dbReference type="NCBIfam" id="NF003700">
    <property type="entry name" value="PRK05313.1"/>
    <property type="match status" value="1"/>
</dbReference>
<dbReference type="PANTHER" id="PTHR37560:SF1">
    <property type="entry name" value="UPF0210 PROTEIN MJ1665"/>
    <property type="match status" value="1"/>
</dbReference>
<dbReference type="PANTHER" id="PTHR37560">
    <property type="entry name" value="UPF0210 PROTEIN SPR0218"/>
    <property type="match status" value="1"/>
</dbReference>
<dbReference type="Pfam" id="PF05167">
    <property type="entry name" value="DUF711"/>
    <property type="match status" value="1"/>
</dbReference>
<dbReference type="SUPFAM" id="SSF51998">
    <property type="entry name" value="PFL-like glycyl radical enzymes"/>
    <property type="match status" value="1"/>
</dbReference>
<accession>A7ZCQ6</accession>
<feature type="chain" id="PRO_1000073148" description="UPF0210 protein Ccon26_06850">
    <location>
        <begin position="1"/>
        <end position="445"/>
    </location>
</feature>